<feature type="chain" id="PRO_0000237806" description="2-C-methyl-D-erythritol 4-phosphate cytidylyltransferase">
    <location>
        <begin position="1"/>
        <end position="225"/>
    </location>
</feature>
<feature type="site" description="Transition state stabilizer" evidence="1">
    <location>
        <position position="13"/>
    </location>
</feature>
<feature type="site" description="Transition state stabilizer" evidence="1">
    <location>
        <position position="20"/>
    </location>
</feature>
<feature type="site" description="Positions MEP for the nucleophilic attack" evidence="1">
    <location>
        <position position="150"/>
    </location>
</feature>
<feature type="site" description="Positions MEP for the nucleophilic attack" evidence="1">
    <location>
        <position position="206"/>
    </location>
</feature>
<organism>
    <name type="scientific">Prochlorococcus marinus (strain NATL2A)</name>
    <dbReference type="NCBI Taxonomy" id="59920"/>
    <lineage>
        <taxon>Bacteria</taxon>
        <taxon>Bacillati</taxon>
        <taxon>Cyanobacteriota</taxon>
        <taxon>Cyanophyceae</taxon>
        <taxon>Synechococcales</taxon>
        <taxon>Prochlorococcaceae</taxon>
        <taxon>Prochlorococcus</taxon>
    </lineage>
</organism>
<reference key="1">
    <citation type="journal article" date="2007" name="PLoS Genet.">
        <title>Patterns and implications of gene gain and loss in the evolution of Prochlorococcus.</title>
        <authorList>
            <person name="Kettler G.C."/>
            <person name="Martiny A.C."/>
            <person name="Huang K."/>
            <person name="Zucker J."/>
            <person name="Coleman M.L."/>
            <person name="Rodrigue S."/>
            <person name="Chen F."/>
            <person name="Lapidus A."/>
            <person name="Ferriera S."/>
            <person name="Johnson J."/>
            <person name="Steglich C."/>
            <person name="Church G.M."/>
            <person name="Richardson P."/>
            <person name="Chisholm S.W."/>
        </authorList>
    </citation>
    <scope>NUCLEOTIDE SEQUENCE [LARGE SCALE GENOMIC DNA]</scope>
    <source>
        <strain>NATL2A</strain>
    </source>
</reference>
<comment type="function">
    <text evidence="1">Catalyzes the formation of 4-diphosphocytidyl-2-C-methyl-D-erythritol from CTP and 2-C-methyl-D-erythritol 4-phosphate (MEP).</text>
</comment>
<comment type="catalytic activity">
    <reaction evidence="1">
        <text>2-C-methyl-D-erythritol 4-phosphate + CTP + H(+) = 4-CDP-2-C-methyl-D-erythritol + diphosphate</text>
        <dbReference type="Rhea" id="RHEA:13429"/>
        <dbReference type="ChEBI" id="CHEBI:15378"/>
        <dbReference type="ChEBI" id="CHEBI:33019"/>
        <dbReference type="ChEBI" id="CHEBI:37563"/>
        <dbReference type="ChEBI" id="CHEBI:57823"/>
        <dbReference type="ChEBI" id="CHEBI:58262"/>
        <dbReference type="EC" id="2.7.7.60"/>
    </reaction>
</comment>
<comment type="pathway">
    <text evidence="1">Isoprenoid biosynthesis; isopentenyl diphosphate biosynthesis via DXP pathway; isopentenyl diphosphate from 1-deoxy-D-xylulose 5-phosphate: step 2/6.</text>
</comment>
<comment type="similarity">
    <text evidence="1">Belongs to the IspD/TarI cytidylyltransferase family. IspD subfamily.</text>
</comment>
<gene>
    <name evidence="1" type="primary">ispD</name>
    <name type="ordered locus">PMN2A_1786</name>
</gene>
<proteinExistence type="inferred from homology"/>
<dbReference type="EC" id="2.7.7.60" evidence="1"/>
<dbReference type="EMBL" id="CP000095">
    <property type="protein sequence ID" value="AAZ59274.1"/>
    <property type="molecule type" value="Genomic_DNA"/>
</dbReference>
<dbReference type="RefSeq" id="WP_011294419.1">
    <property type="nucleotide sequence ID" value="NC_007335.2"/>
</dbReference>
<dbReference type="SMR" id="Q46GW4"/>
<dbReference type="STRING" id="59920.PMN2A_1786"/>
<dbReference type="KEGG" id="pmn:PMN2A_1786"/>
<dbReference type="HOGENOM" id="CLU_061281_1_0_3"/>
<dbReference type="OrthoDB" id="9806837at2"/>
<dbReference type="PhylomeDB" id="Q46GW4"/>
<dbReference type="UniPathway" id="UPA00056">
    <property type="reaction ID" value="UER00093"/>
</dbReference>
<dbReference type="Proteomes" id="UP000002535">
    <property type="component" value="Chromosome"/>
</dbReference>
<dbReference type="GO" id="GO:0050518">
    <property type="term" value="F:2-C-methyl-D-erythritol 4-phosphate cytidylyltransferase activity"/>
    <property type="evidence" value="ECO:0007669"/>
    <property type="project" value="UniProtKB-UniRule"/>
</dbReference>
<dbReference type="GO" id="GO:0019288">
    <property type="term" value="P:isopentenyl diphosphate biosynthetic process, methylerythritol 4-phosphate pathway"/>
    <property type="evidence" value="ECO:0007669"/>
    <property type="project" value="UniProtKB-UniRule"/>
</dbReference>
<dbReference type="CDD" id="cd02516">
    <property type="entry name" value="CDP-ME_synthetase"/>
    <property type="match status" value="1"/>
</dbReference>
<dbReference type="FunFam" id="3.90.550.10:FF:000003">
    <property type="entry name" value="2-C-methyl-D-erythritol 4-phosphate cytidylyltransferase"/>
    <property type="match status" value="1"/>
</dbReference>
<dbReference type="Gene3D" id="3.90.550.10">
    <property type="entry name" value="Spore Coat Polysaccharide Biosynthesis Protein SpsA, Chain A"/>
    <property type="match status" value="1"/>
</dbReference>
<dbReference type="HAMAP" id="MF_00108">
    <property type="entry name" value="IspD"/>
    <property type="match status" value="1"/>
</dbReference>
<dbReference type="InterPro" id="IPR001228">
    <property type="entry name" value="IspD"/>
</dbReference>
<dbReference type="InterPro" id="IPR034683">
    <property type="entry name" value="IspD/TarI"/>
</dbReference>
<dbReference type="InterPro" id="IPR050088">
    <property type="entry name" value="IspD/TarI_cytidylyltransf_bact"/>
</dbReference>
<dbReference type="InterPro" id="IPR018294">
    <property type="entry name" value="ISPD_synthase_CS"/>
</dbReference>
<dbReference type="InterPro" id="IPR029044">
    <property type="entry name" value="Nucleotide-diphossugar_trans"/>
</dbReference>
<dbReference type="NCBIfam" id="TIGR00453">
    <property type="entry name" value="ispD"/>
    <property type="match status" value="1"/>
</dbReference>
<dbReference type="PANTHER" id="PTHR32125">
    <property type="entry name" value="2-C-METHYL-D-ERYTHRITOL 4-PHOSPHATE CYTIDYLYLTRANSFERASE, CHLOROPLASTIC"/>
    <property type="match status" value="1"/>
</dbReference>
<dbReference type="PANTHER" id="PTHR32125:SF4">
    <property type="entry name" value="2-C-METHYL-D-ERYTHRITOL 4-PHOSPHATE CYTIDYLYLTRANSFERASE, CHLOROPLASTIC"/>
    <property type="match status" value="1"/>
</dbReference>
<dbReference type="Pfam" id="PF01128">
    <property type="entry name" value="IspD"/>
    <property type="match status" value="1"/>
</dbReference>
<dbReference type="SUPFAM" id="SSF53448">
    <property type="entry name" value="Nucleotide-diphospho-sugar transferases"/>
    <property type="match status" value="1"/>
</dbReference>
<dbReference type="PROSITE" id="PS01295">
    <property type="entry name" value="ISPD"/>
    <property type="match status" value="1"/>
</dbReference>
<accession>Q46GW4</accession>
<keyword id="KW-0414">Isoprene biosynthesis</keyword>
<keyword id="KW-0548">Nucleotidyltransferase</keyword>
<keyword id="KW-1185">Reference proteome</keyword>
<keyword id="KW-0808">Transferase</keyword>
<sequence length="225" mass="24193">MHLLIAAAGSGSRMGADRNKLLLKVAGKTVLEWTLKAAFEAKTISWIGIIGQPKDKNPICSILDNSVKAVQWINGGSTRQQSVQLGLAALPNDAKSVLIHDGARCLVRSFVFDEISKIVSKGQSVIAASQVTDTIKKVDIDGEIIESPPRSDLWAAQTPQGFPVNKLKHAHSEAISKGWNVTDDASLFERLGLPVKIYDAGPSNIKVTTPFDLVIAESLLSTLKD</sequence>
<protein>
    <recommendedName>
        <fullName evidence="1">2-C-methyl-D-erythritol 4-phosphate cytidylyltransferase</fullName>
        <ecNumber evidence="1">2.7.7.60</ecNumber>
    </recommendedName>
    <alternativeName>
        <fullName evidence="1">4-diphosphocytidyl-2C-methyl-D-erythritol synthase</fullName>
    </alternativeName>
    <alternativeName>
        <fullName evidence="1">MEP cytidylyltransferase</fullName>
        <shortName evidence="1">MCT</shortName>
    </alternativeName>
</protein>
<name>ISPD_PROMT</name>
<evidence type="ECO:0000255" key="1">
    <source>
        <dbReference type="HAMAP-Rule" id="MF_00108"/>
    </source>
</evidence>